<evidence type="ECO:0000255" key="1">
    <source>
        <dbReference type="HAMAP-Rule" id="MF_04109"/>
    </source>
</evidence>
<evidence type="ECO:0000269" key="2">
    <source>
    </source>
</evidence>
<evidence type="ECO:0000269" key="3">
    <source>
    </source>
</evidence>
<evidence type="ECO:0000269" key="4">
    <source>
    </source>
</evidence>
<evidence type="ECO:0000269" key="5">
    <source>
    </source>
</evidence>
<evidence type="ECO:0000303" key="6">
    <source>
    </source>
</evidence>
<evidence type="ECO:0000303" key="7">
    <source>
    </source>
</evidence>
<evidence type="ECO:0000303" key="8">
    <source>
    </source>
</evidence>
<evidence type="ECO:0000303" key="9">
    <source ref="2"/>
</evidence>
<evidence type="ECO:0000305" key="10"/>
<evidence type="ECO:0000305" key="11">
    <source>
    </source>
</evidence>
<evidence type="ECO:0000305" key="12">
    <source>
    </source>
</evidence>
<evidence type="ECO:0007829" key="13">
    <source>
        <dbReference type="PDB" id="1AM7"/>
    </source>
</evidence>
<evidence type="ECO:0007829" key="14">
    <source>
        <dbReference type="PDB" id="1D9U"/>
    </source>
</evidence>
<sequence length="158" mass="17825">MVEINNQRKAFLDMLAWSEGTDNGRQKTRNHGYDVIVGGELFTDYSDHPRKLVTLNPKLKSTGAGRYQLLSRWWDAYRKQLGLKDFSPKSQDAVALQQIKERGALPMIDRGDIRQAIDRCSNIWASLPGAGYGQFEHKADSLIAKFKEAGGTVREIDV</sequence>
<name>ENLYS_LAMBD</name>
<accession>P03706</accession>
<dbReference type="EC" id="4.2.2.n2" evidence="1 2 4"/>
<dbReference type="EMBL" id="J02459">
    <property type="protein sequence ID" value="AAA96598.1"/>
    <property type="molecule type" value="Genomic_DNA"/>
</dbReference>
<dbReference type="PIR" id="B04333">
    <property type="entry name" value="EYBPL"/>
</dbReference>
<dbReference type="RefSeq" id="NP_040645.1">
    <property type="nucleotide sequence ID" value="NC_001416.1"/>
</dbReference>
<dbReference type="PDB" id="1AM7">
    <property type="method" value="X-ray"/>
    <property type="resolution" value="2.30 A"/>
    <property type="chains" value="A/B/C=1-158"/>
</dbReference>
<dbReference type="PDB" id="1D9U">
    <property type="method" value="X-ray"/>
    <property type="resolution" value="2.60 A"/>
    <property type="chains" value="A/B=1-154"/>
</dbReference>
<dbReference type="PDB" id="3D3D">
    <property type="method" value="X-ray"/>
    <property type="resolution" value="2.60 A"/>
    <property type="chains" value="A/B=1-154"/>
</dbReference>
<dbReference type="PDBsum" id="1AM7"/>
<dbReference type="PDBsum" id="1D9U"/>
<dbReference type="PDBsum" id="3D3D"/>
<dbReference type="BMRB" id="P03706"/>
<dbReference type="SMR" id="P03706"/>
<dbReference type="IntAct" id="P03706">
    <property type="interactions" value="1"/>
</dbReference>
<dbReference type="DrugBank" id="DB04206">
    <property type="generic name" value="7-Aza-L-tryptophan"/>
</dbReference>
<dbReference type="CAZy" id="GH104">
    <property type="family name" value="Glycoside Hydrolase Family 104"/>
</dbReference>
<dbReference type="GeneID" id="2703480"/>
<dbReference type="KEGG" id="vg:2703480"/>
<dbReference type="EvolutionaryTrace" id="P03706"/>
<dbReference type="Proteomes" id="UP000001711">
    <property type="component" value="Genome"/>
</dbReference>
<dbReference type="GO" id="GO:0030430">
    <property type="term" value="C:host cell cytoplasm"/>
    <property type="evidence" value="ECO:0007669"/>
    <property type="project" value="UniProtKB-SubCell"/>
</dbReference>
<dbReference type="GO" id="GO:0003796">
    <property type="term" value="F:lysozyme activity"/>
    <property type="evidence" value="ECO:0000314"/>
    <property type="project" value="UniProtKB"/>
</dbReference>
<dbReference type="GO" id="GO:0008933">
    <property type="term" value="F:peptidoglycan lytic transglycosylase activity"/>
    <property type="evidence" value="ECO:0000314"/>
    <property type="project" value="UniProtKB"/>
</dbReference>
<dbReference type="GO" id="GO:0042742">
    <property type="term" value="P:defense response to bacterium"/>
    <property type="evidence" value="ECO:0007669"/>
    <property type="project" value="UniProtKB-KW"/>
</dbReference>
<dbReference type="GO" id="GO:0009253">
    <property type="term" value="P:peptidoglycan catabolic process"/>
    <property type="evidence" value="ECO:0007669"/>
    <property type="project" value="UniProtKB-UniRule"/>
</dbReference>
<dbReference type="GO" id="GO:0044659">
    <property type="term" value="P:viral release from host cell by cytolysis"/>
    <property type="evidence" value="ECO:0000314"/>
    <property type="project" value="UniProtKB"/>
</dbReference>
<dbReference type="CDD" id="cd00736">
    <property type="entry name" value="lambda_lys-like"/>
    <property type="match status" value="1"/>
</dbReference>
<dbReference type="FunFam" id="1.10.530.10:FF:000009">
    <property type="entry name" value="Lysozyme"/>
    <property type="match status" value="1"/>
</dbReference>
<dbReference type="Gene3D" id="1.10.530.10">
    <property type="match status" value="1"/>
</dbReference>
<dbReference type="HAMAP" id="MF_04109">
    <property type="entry name" value="ENDOLYSIN_LAMBDA"/>
    <property type="match status" value="1"/>
</dbReference>
<dbReference type="InterPro" id="IPR034691">
    <property type="entry name" value="Endolysin_lambda_type"/>
</dbReference>
<dbReference type="InterPro" id="IPR023346">
    <property type="entry name" value="Lysozyme-like_dom_sf"/>
</dbReference>
<dbReference type="SUPFAM" id="SSF53955">
    <property type="entry name" value="Lysozyme-like"/>
    <property type="match status" value="1"/>
</dbReference>
<keyword id="KW-0002">3D-structure</keyword>
<keyword id="KW-0929">Antimicrobial</keyword>
<keyword id="KW-0081">Bacteriolytic enzyme</keyword>
<keyword id="KW-0204">Cytolysis</keyword>
<keyword id="KW-0903">Direct protein sequencing</keyword>
<keyword id="KW-0578">Host cell lysis by virus</keyword>
<keyword id="KW-1035">Host cytoplasm</keyword>
<keyword id="KW-0456">Lyase</keyword>
<keyword id="KW-1185">Reference proteome</keyword>
<keyword id="KW-1188">Viral release from host cell</keyword>
<gene>
    <name type="primary">R</name>
</gene>
<protein>
    <recommendedName>
        <fullName evidence="1 9">Endolysin</fullName>
        <ecNumber evidence="1 2 4">4.2.2.n2</ecNumber>
    </recommendedName>
    <alternativeName>
        <fullName evidence="1">Lysis protein</fullName>
    </alternativeName>
    <alternativeName>
        <fullName evidence="1 6 7">Lysozyme</fullName>
    </alternativeName>
    <alternativeName>
        <fullName evidence="1 8">Transglycosylase</fullName>
    </alternativeName>
</protein>
<reference key="1">
    <citation type="journal article" date="1982" name="J. Mol. Biol.">
        <title>Nucleotide sequence of bacteriophage lambda DNA.</title>
        <authorList>
            <person name="Sanger F."/>
            <person name="Coulson A.R."/>
            <person name="Hong G.F."/>
            <person name="Hill D.F."/>
            <person name="Petersen G.B."/>
        </authorList>
    </citation>
    <scope>NUCLEOTIDE SEQUENCE [LARGE SCALE GENOMIC DNA]</scope>
</reference>
<reference key="2">
    <citation type="journal article" date="1971" name="Nature New Biol.">
        <title>Amino-acid sequence of lambda phage endolysin.</title>
        <authorList>
            <person name="Imada M."/>
            <person name="Tsugita A."/>
        </authorList>
    </citation>
    <scope>PROTEIN SEQUENCE</scope>
</reference>
<reference key="3">
    <citation type="journal article" date="1969" name="J. Biol. Chem.">
        <title>The lysozyme of bacteriophage lambda. I. Purification and molecular weight.</title>
        <authorList>
            <person name="Black L.W."/>
            <person name="Hogness D.S."/>
        </authorList>
    </citation>
    <scope>CHARACTERIZATION</scope>
    <scope>SUBUNIT</scope>
</reference>
<reference key="4">
    <citation type="journal article" date="1980" name="Biochim. Biophys. Acta">
        <title>Murein transglycosylase from phage lambda lysate. Purification and properties.</title>
        <authorList>
            <person name="Bienkowska-Szewczyk K."/>
            <person name="Taylor A."/>
        </authorList>
    </citation>
    <scope>CATALYTIC ACTIVITY</scope>
    <scope>BIOPHYSICOCHEMICAL PROPERTIES</scope>
</reference>
<reference key="5">
    <citation type="journal article" date="1981" name="Mol. Gen. Genet.">
        <title>The R gene product of bacteriophage lambda is the murein transglycosylase.</title>
        <authorList>
            <person name="Bienkowska-Szewczyk K."/>
            <person name="Lipinska B."/>
            <person name="Taylor A."/>
        </authorList>
    </citation>
    <scope>IDENTIFICATION</scope>
</reference>
<reference key="6">
    <citation type="journal article" date="1999" name="FEBS Lett.">
        <title>Histidine modification and mutagenesis point to the involvement of a large conformational change in the mechanism of action of phage lambda lysozyme.</title>
        <authorList>
            <person name="Evrard C."/>
            <person name="Fastrez J."/>
            <person name="Soumillion P."/>
        </authorList>
    </citation>
    <scope>MUTAGENESIS OF HIS-31; HIS-48 AND HIS-137</scope>
    <scope>CATALYTIC ACTIVITY</scope>
</reference>
<reference key="7">
    <citation type="journal article" date="2013" name="Curr. Opin. Microbiol.">
        <title>Phage lysis: do we have the hole story yet?</title>
        <authorList>
            <person name="Young R."/>
        </authorList>
    </citation>
    <scope>REVIEW</scope>
</reference>
<reference key="8">
    <citation type="journal article" date="1998" name="J. Mol. Biol.">
        <title>Crystal structure of the lysozyme from bacteriophage lambda and its relationship with V and C-type lysozymes.</title>
        <authorList>
            <person name="Evrard C."/>
            <person name="Fastrez J."/>
            <person name="Declercq J.-P."/>
        </authorList>
    </citation>
    <scope>X-RAY CRYSTALLOGRAPHY (2.3 ANGSTROMS)</scope>
    <scope>ACTIVE SITE</scope>
</reference>
<reference key="9">
    <citation type="journal article" date="2010" name="Biomol. NMR. Assign.">
        <title>Backbone 1H, 13C, and 15N resonance assignments for lysozyme from bacteriophage lambda.</title>
        <authorList>
            <person name="Di Paolo A."/>
            <person name="Duval V."/>
            <person name="Matagne A."/>
            <person name="Redfield C."/>
        </authorList>
    </citation>
    <scope>STRUCTURE BY NMR</scope>
</reference>
<feature type="chain" id="PRO_0000218108" description="Endolysin">
    <location>
        <begin position="1"/>
        <end position="158"/>
    </location>
</feature>
<feature type="active site" evidence="1 5">
    <location>
        <position position="19"/>
    </location>
</feature>
<feature type="mutagenesis site" description="No effect on lytic activity." evidence="2">
    <original>H</original>
    <variation>D</variation>
    <location>
        <position position="31"/>
    </location>
</feature>
<feature type="mutagenesis site" description="No effect on lytic activity; when associated with N-137." evidence="2">
    <original>H</original>
    <variation>N</variation>
    <location>
        <position position="31"/>
    </location>
</feature>
<feature type="mutagenesis site" description="97% loss of lytic activity." evidence="2">
    <original>H</original>
    <variation>N</variation>
    <location>
        <position position="48"/>
    </location>
</feature>
<feature type="mutagenesis site" description="No effect on lytic activity; when associated with N-31." evidence="2">
    <original>H</original>
    <variation>N</variation>
    <location>
        <position position="137"/>
    </location>
</feature>
<feature type="sequence conflict" description="In Ref. 2; AA sequence." evidence="10" ref="2">
    <location>
        <position position="74"/>
    </location>
</feature>
<feature type="helix" evidence="13">
    <location>
        <begin position="6"/>
        <end position="16"/>
    </location>
</feature>
<feature type="strand" evidence="13">
    <location>
        <begin position="20"/>
        <end position="26"/>
    </location>
</feature>
<feature type="turn" evidence="13">
    <location>
        <begin position="31"/>
        <end position="34"/>
    </location>
</feature>
<feature type="strand" evidence="13">
    <location>
        <begin position="53"/>
        <end position="56"/>
    </location>
</feature>
<feature type="strand" evidence="13">
    <location>
        <begin position="59"/>
        <end position="61"/>
    </location>
</feature>
<feature type="turn" evidence="13">
    <location>
        <begin position="65"/>
        <end position="68"/>
    </location>
</feature>
<feature type="helix" evidence="13">
    <location>
        <begin position="76"/>
        <end position="81"/>
    </location>
</feature>
<feature type="helix" evidence="13">
    <location>
        <begin position="88"/>
        <end position="101"/>
    </location>
</feature>
<feature type="helix" evidence="13">
    <location>
        <begin position="105"/>
        <end position="110"/>
    </location>
</feature>
<feature type="helix" evidence="13">
    <location>
        <begin position="113"/>
        <end position="120"/>
    </location>
</feature>
<feature type="turn" evidence="13">
    <location>
        <begin position="121"/>
        <end position="123"/>
    </location>
</feature>
<feature type="strand" evidence="14">
    <location>
        <begin position="132"/>
        <end position="134"/>
    </location>
</feature>
<feature type="helix" evidence="13">
    <location>
        <begin position="135"/>
        <end position="148"/>
    </location>
</feature>
<proteinExistence type="evidence at protein level"/>
<organismHost>
    <name type="scientific">Escherichia coli</name>
    <dbReference type="NCBI Taxonomy" id="562"/>
</organismHost>
<comment type="function">
    <text evidence="1 11 12">Endolysin with transglycosylase activity that degrades host peptidoglycans and participates with the holin and spanin proteins in the sequential events which lead to the programmed host cell lysis releasing the mature viral particles. Once the holin has permeabilized the host cell membrane, the endolysin can reach the periplasm and break down the peptidoglycan layer.</text>
</comment>
<comment type="catalytic activity">
    <reaction evidence="1 2 4">
        <text>Endolytic cleavage of the (1-&gt;4)-beta-glycosidic linkage between N-acetylmuramic acid (MurNAc) and N-acetylglucosamine (GlcNAc) residues in peptidoglycan with concomitant formation of a 1,6-anhydrobond in the MurNAc residue.</text>
        <dbReference type="EC" id="4.2.2.n2"/>
    </reaction>
</comment>
<comment type="activity regulation">
    <text evidence="4">Inactivated by zinc.</text>
</comment>
<comment type="biophysicochemical properties">
    <phDependence>
        <text evidence="4">Optimum pH is 6.6.</text>
    </phDependence>
</comment>
<comment type="subunit">
    <text evidence="1 3">Monomer.</text>
</comment>
<comment type="subcellular location">
    <subcellularLocation>
        <location evidence="1">Host cytoplasm</location>
    </subcellularLocation>
    <text evidence="1 12">The endolysin is cytoplasmic, but can reach the periplasmic space with the help of the holins which disrupt the host cell membrane.</text>
</comment>
<comment type="similarity">
    <text evidence="1">Belongs to the glycosyl hydrolase 24 family.</text>
</comment>
<organism>
    <name type="scientific">Escherichia phage lambda</name>
    <name type="common">Bacteriophage lambda</name>
    <dbReference type="NCBI Taxonomy" id="2681611"/>
    <lineage>
        <taxon>Viruses</taxon>
        <taxon>Duplodnaviria</taxon>
        <taxon>Heunggongvirae</taxon>
        <taxon>Uroviricota</taxon>
        <taxon>Caudoviricetes</taxon>
        <taxon>Lambdavirus</taxon>
        <taxon>Lambdavirus lambda</taxon>
    </lineage>
</organism>